<reference key="1">
    <citation type="submission" date="2006-08" db="EMBL/GenBank/DDBJ databases">
        <authorList>
            <consortium name="NIH - Mammalian Gene Collection (MGC) project"/>
        </authorList>
    </citation>
    <scope>NUCLEOTIDE SEQUENCE [LARGE SCALE MRNA]</scope>
    <source>
        <strain>Hereford</strain>
        <tissue>Fetal pons</tissue>
    </source>
</reference>
<reference key="2">
    <citation type="journal article" date="1980" name="FEBS Lett.">
        <title>The complete amino acid sequence of the P2 protein in bovine peripheral nerve myelin.</title>
        <authorList>
            <person name="Kitamura K."/>
            <person name="Suzuki M."/>
            <person name="Suzuki A."/>
            <person name="Uyemura K."/>
        </authorList>
    </citation>
    <scope>PROTEIN SEQUENCE OF 2-132</scope>
    <scope>ACETYLATION AT SER-2</scope>
</reference>
<reference key="3">
    <citation type="journal article" date="1988" name="EMBO J.">
        <title>The three-dimensional structure of P2 myelin protein.</title>
        <authorList>
            <person name="Jones T.A."/>
            <person name="Bergfors T."/>
            <person name="Sedzik J."/>
            <person name="Unge T."/>
        </authorList>
    </citation>
    <scope>X-RAY CRYSTALLOGRAPHY (2.7 ANGSTROMS)</scope>
</reference>
<reference evidence="6" key="4">
    <citation type="journal article" date="1993" name="J. Mol. Biol.">
        <title>Crystallographic studies on a family of cellular lipophilic transport proteins. Refinement of P2 myelin protein and the structure determination and refinement of cellular retinol-binding protein in complex with all-trans-retinol.</title>
        <authorList>
            <person name="Cowan S.W."/>
            <person name="Newcomer M.E."/>
            <person name="Jones T.A."/>
        </authorList>
    </citation>
    <scope>X-RAY CRYSTALLOGRAPHY (2.7 ANGSTROMS) IN COMPLEX WITH OLEATE</scope>
</reference>
<protein>
    <recommendedName>
        <fullName>Myelin P2 protein</fullName>
    </recommendedName>
</protein>
<proteinExistence type="evidence at protein level"/>
<comment type="function">
    <text>May play a role in lipid transport protein in Schwann cells. May bind cholesterol.</text>
</comment>
<comment type="subunit">
    <text evidence="4">Monomer.</text>
</comment>
<comment type="subcellular location">
    <subcellularLocation>
        <location evidence="1">Cytoplasm</location>
    </subcellularLocation>
</comment>
<comment type="domain">
    <text>Forms a beta-barrel structure that accommodates hydrophobic ligands in its interior.</text>
</comment>
<comment type="miscellaneous">
    <text>P2 protein and myelin basic protein together constitute a major fraction of peripheral nervous system myelin protein.</text>
</comment>
<comment type="similarity">
    <text evidence="5">Belongs to the calycin superfamily. Fatty-acid binding protein (FABP) family.</text>
</comment>
<evidence type="ECO:0000250" key="1"/>
<evidence type="ECO:0000250" key="2">
    <source>
        <dbReference type="UniProtKB" id="P02689"/>
    </source>
</evidence>
<evidence type="ECO:0000269" key="3">
    <source>
    </source>
</evidence>
<evidence type="ECO:0000269" key="4">
    <source>
    </source>
</evidence>
<evidence type="ECO:0000305" key="5"/>
<evidence type="ECO:0007744" key="6">
    <source>
        <dbReference type="PDB" id="1PMP"/>
    </source>
</evidence>
<evidence type="ECO:0007829" key="7">
    <source>
        <dbReference type="PDB" id="1PMP"/>
    </source>
</evidence>
<feature type="initiator methionine" description="Removed" evidence="3">
    <location>
        <position position="1"/>
    </location>
</feature>
<feature type="chain" id="PRO_0000067387" description="Myelin P2 protein">
    <location>
        <begin position="2"/>
        <end position="132"/>
    </location>
</feature>
<feature type="binding site" evidence="4 6">
    <location>
        <position position="107"/>
    </location>
    <ligand>
        <name>(9Z)-octadecenoate</name>
        <dbReference type="ChEBI" id="CHEBI:30823"/>
    </ligand>
</feature>
<feature type="binding site" evidence="2">
    <location>
        <position position="107"/>
    </location>
    <ligand>
        <name>hexadecanoate</name>
        <dbReference type="ChEBI" id="CHEBI:7896"/>
    </ligand>
</feature>
<feature type="binding site" evidence="4 6">
    <location>
        <begin position="127"/>
        <end position="129"/>
    </location>
    <ligand>
        <name>(9Z)-octadecenoate</name>
        <dbReference type="ChEBI" id="CHEBI:30823"/>
    </ligand>
</feature>
<feature type="binding site" evidence="2">
    <location>
        <begin position="127"/>
        <end position="129"/>
    </location>
    <ligand>
        <name>hexadecanoate</name>
        <dbReference type="ChEBI" id="CHEBI:7896"/>
    </ligand>
</feature>
<feature type="modified residue" description="N-acetylserine" evidence="3">
    <location>
        <position position="2"/>
    </location>
</feature>
<feature type="disulfide bond" evidence="3">
    <location>
        <begin position="118"/>
        <end position="125"/>
    </location>
</feature>
<feature type="sequence conflict" description="In Ref. 2; AA sequence." evidence="5" ref="2">
    <original>D</original>
    <variation>N</variation>
    <location>
        <position position="99"/>
    </location>
</feature>
<feature type="strand" evidence="7">
    <location>
        <begin position="7"/>
        <end position="13"/>
    </location>
</feature>
<feature type="helix" evidence="7">
    <location>
        <begin position="17"/>
        <end position="22"/>
    </location>
</feature>
<feature type="turn" evidence="7">
    <location>
        <begin position="23"/>
        <end position="25"/>
    </location>
</feature>
<feature type="helix" evidence="7">
    <location>
        <begin position="28"/>
        <end position="35"/>
    </location>
</feature>
<feature type="strand" evidence="7">
    <location>
        <begin position="40"/>
        <end position="46"/>
    </location>
</feature>
<feature type="strand" evidence="7">
    <location>
        <begin position="49"/>
        <end position="55"/>
    </location>
</feature>
<feature type="strand" evidence="7">
    <location>
        <begin position="60"/>
        <end position="65"/>
    </location>
</feature>
<feature type="strand" evidence="7">
    <location>
        <begin position="67"/>
        <end position="74"/>
    </location>
</feature>
<feature type="strand" evidence="7">
    <location>
        <begin position="80"/>
        <end position="88"/>
    </location>
</feature>
<feature type="strand" evidence="7">
    <location>
        <begin position="91"/>
        <end position="98"/>
    </location>
</feature>
<feature type="strand" evidence="7">
    <location>
        <begin position="101"/>
        <end position="110"/>
    </location>
</feature>
<feature type="strand" evidence="7">
    <location>
        <begin position="113"/>
        <end position="119"/>
    </location>
</feature>
<feature type="strand" evidence="7">
    <location>
        <begin position="124"/>
        <end position="131"/>
    </location>
</feature>
<organism>
    <name type="scientific">Bos taurus</name>
    <name type="common">Bovine</name>
    <dbReference type="NCBI Taxonomy" id="9913"/>
    <lineage>
        <taxon>Eukaryota</taxon>
        <taxon>Metazoa</taxon>
        <taxon>Chordata</taxon>
        <taxon>Craniata</taxon>
        <taxon>Vertebrata</taxon>
        <taxon>Euteleostomi</taxon>
        <taxon>Mammalia</taxon>
        <taxon>Eutheria</taxon>
        <taxon>Laurasiatheria</taxon>
        <taxon>Artiodactyla</taxon>
        <taxon>Ruminantia</taxon>
        <taxon>Pecora</taxon>
        <taxon>Bovidae</taxon>
        <taxon>Bovinae</taxon>
        <taxon>Bos</taxon>
    </lineage>
</organism>
<dbReference type="EMBL" id="BC120137">
    <property type="protein sequence ID" value="AAI20138.1"/>
    <property type="molecule type" value="mRNA"/>
</dbReference>
<dbReference type="PIR" id="A03144">
    <property type="entry name" value="MPBO2"/>
</dbReference>
<dbReference type="RefSeq" id="NP_001068707.1">
    <property type="nucleotide sequence ID" value="NM_001075239.2"/>
</dbReference>
<dbReference type="PDB" id="1PMP">
    <property type="method" value="X-ray"/>
    <property type="resolution" value="2.70 A"/>
    <property type="chains" value="A/B/C=2-132"/>
</dbReference>
<dbReference type="PDBsum" id="1PMP"/>
<dbReference type="SMR" id="P02690"/>
<dbReference type="FunCoup" id="P02690">
    <property type="interactions" value="149"/>
</dbReference>
<dbReference type="STRING" id="9913.ENSBTAP00000043814"/>
<dbReference type="iPTMnet" id="P02690"/>
<dbReference type="PaxDb" id="9913-ENSBTAP00000043814"/>
<dbReference type="PeptideAtlas" id="P02690"/>
<dbReference type="Ensembl" id="ENSBTAT00000046521.3">
    <property type="protein sequence ID" value="ENSBTAP00000043814.1"/>
    <property type="gene ID" value="ENSBTAG00000000071.5"/>
</dbReference>
<dbReference type="GeneID" id="506062"/>
<dbReference type="KEGG" id="bta:506062"/>
<dbReference type="CTD" id="5375"/>
<dbReference type="VEuPathDB" id="HostDB:ENSBTAG00000000071"/>
<dbReference type="VGNC" id="VGNC:53876">
    <property type="gene designation" value="PMP2"/>
</dbReference>
<dbReference type="eggNOG" id="KOG4015">
    <property type="taxonomic scope" value="Eukaryota"/>
</dbReference>
<dbReference type="GeneTree" id="ENSGT00940000160445"/>
<dbReference type="HOGENOM" id="CLU_113772_0_0_1"/>
<dbReference type="InParanoid" id="P02690"/>
<dbReference type="OMA" id="LTAKCIM"/>
<dbReference type="OrthoDB" id="412780at2759"/>
<dbReference type="TreeFam" id="TF316894"/>
<dbReference type="EvolutionaryTrace" id="P02690"/>
<dbReference type="Proteomes" id="UP000009136">
    <property type="component" value="Chromosome 14"/>
</dbReference>
<dbReference type="Bgee" id="ENSBTAG00000000071">
    <property type="expression patterns" value="Expressed in intramuscular adipose tissue and 36 other cell types or tissues"/>
</dbReference>
<dbReference type="GO" id="GO:0005829">
    <property type="term" value="C:cytosol"/>
    <property type="evidence" value="ECO:0000318"/>
    <property type="project" value="GO_Central"/>
</dbReference>
<dbReference type="GO" id="GO:0043209">
    <property type="term" value="C:myelin sheath"/>
    <property type="evidence" value="ECO:0007669"/>
    <property type="project" value="InterPro"/>
</dbReference>
<dbReference type="GO" id="GO:0005634">
    <property type="term" value="C:nucleus"/>
    <property type="evidence" value="ECO:0000318"/>
    <property type="project" value="GO_Central"/>
</dbReference>
<dbReference type="GO" id="GO:0015485">
    <property type="term" value="F:cholesterol binding"/>
    <property type="evidence" value="ECO:0000250"/>
    <property type="project" value="UniProtKB"/>
</dbReference>
<dbReference type="GO" id="GO:0005504">
    <property type="term" value="F:fatty acid binding"/>
    <property type="evidence" value="ECO:0000250"/>
    <property type="project" value="UniProtKB"/>
</dbReference>
<dbReference type="GO" id="GO:0015908">
    <property type="term" value="P:fatty acid transport"/>
    <property type="evidence" value="ECO:0000318"/>
    <property type="project" value="GO_Central"/>
</dbReference>
<dbReference type="GO" id="GO:0061024">
    <property type="term" value="P:membrane organization"/>
    <property type="evidence" value="ECO:0007669"/>
    <property type="project" value="Ensembl"/>
</dbReference>
<dbReference type="CDD" id="cd19469">
    <property type="entry name" value="FABP8"/>
    <property type="match status" value="1"/>
</dbReference>
<dbReference type="FunFam" id="2.40.128.20:FF:000001">
    <property type="entry name" value="Fatty acid-binding protein, adipocyte"/>
    <property type="match status" value="1"/>
</dbReference>
<dbReference type="Gene3D" id="2.40.128.20">
    <property type="match status" value="1"/>
</dbReference>
<dbReference type="InterPro" id="IPR012674">
    <property type="entry name" value="Calycin"/>
</dbReference>
<dbReference type="InterPro" id="IPR000463">
    <property type="entry name" value="Fatty_acid-bd"/>
</dbReference>
<dbReference type="InterPro" id="IPR031259">
    <property type="entry name" value="ILBP"/>
</dbReference>
<dbReference type="InterPro" id="IPR000566">
    <property type="entry name" value="Lipocln_cytosolic_FA-bd_dom"/>
</dbReference>
<dbReference type="InterPro" id="IPR031256">
    <property type="entry name" value="Myelin_P2"/>
</dbReference>
<dbReference type="PANTHER" id="PTHR11955">
    <property type="entry name" value="FATTY ACID BINDING PROTEIN"/>
    <property type="match status" value="1"/>
</dbReference>
<dbReference type="Pfam" id="PF00061">
    <property type="entry name" value="Lipocalin"/>
    <property type="match status" value="1"/>
</dbReference>
<dbReference type="PRINTS" id="PR00178">
    <property type="entry name" value="FATTYACIDBP"/>
</dbReference>
<dbReference type="SUPFAM" id="SSF50814">
    <property type="entry name" value="Lipocalins"/>
    <property type="match status" value="1"/>
</dbReference>
<dbReference type="PROSITE" id="PS00214">
    <property type="entry name" value="FABP"/>
    <property type="match status" value="1"/>
</dbReference>
<keyword id="KW-0002">3D-structure</keyword>
<keyword id="KW-0007">Acetylation</keyword>
<keyword id="KW-0963">Cytoplasm</keyword>
<keyword id="KW-0903">Direct protein sequencing</keyword>
<keyword id="KW-1015">Disulfide bond</keyword>
<keyword id="KW-0446">Lipid-binding</keyword>
<keyword id="KW-1185">Reference proteome</keyword>
<keyword id="KW-0813">Transport</keyword>
<sequence>MSNKFLGTWKLVSSENFDEYMKALGVGLATRKLGNLAKPRVIISKKGDIITIRTESPFKNTEISFKLGQEFEETTADNRKTKSTVTLARGSLNQVQKWDGNETTIKRKLVDGKMVVECKMKDVVCTRIYEKV</sequence>
<name>MYP2_BOVIN</name>
<gene>
    <name type="primary">PMP2</name>
</gene>
<accession>P02690</accession>
<accession>Q0VCJ4</accession>